<dbReference type="EC" id="1.1.1.267" evidence="1"/>
<dbReference type="EMBL" id="CP000094">
    <property type="protein sequence ID" value="ABA72850.1"/>
    <property type="molecule type" value="Genomic_DNA"/>
</dbReference>
<dbReference type="RefSeq" id="WP_011332687.1">
    <property type="nucleotide sequence ID" value="NC_007492.2"/>
</dbReference>
<dbReference type="SMR" id="Q3KHA6"/>
<dbReference type="KEGG" id="pfo:Pfl01_1107"/>
<dbReference type="eggNOG" id="COG0743">
    <property type="taxonomic scope" value="Bacteria"/>
</dbReference>
<dbReference type="HOGENOM" id="CLU_035714_4_0_6"/>
<dbReference type="UniPathway" id="UPA00056">
    <property type="reaction ID" value="UER00092"/>
</dbReference>
<dbReference type="Proteomes" id="UP000002704">
    <property type="component" value="Chromosome"/>
</dbReference>
<dbReference type="GO" id="GO:0030604">
    <property type="term" value="F:1-deoxy-D-xylulose-5-phosphate reductoisomerase activity"/>
    <property type="evidence" value="ECO:0007669"/>
    <property type="project" value="UniProtKB-UniRule"/>
</dbReference>
<dbReference type="GO" id="GO:0030145">
    <property type="term" value="F:manganese ion binding"/>
    <property type="evidence" value="ECO:0007669"/>
    <property type="project" value="TreeGrafter"/>
</dbReference>
<dbReference type="GO" id="GO:0070402">
    <property type="term" value="F:NADPH binding"/>
    <property type="evidence" value="ECO:0007669"/>
    <property type="project" value="InterPro"/>
</dbReference>
<dbReference type="GO" id="GO:0051484">
    <property type="term" value="P:isopentenyl diphosphate biosynthetic process, methylerythritol 4-phosphate pathway involved in terpenoid biosynthetic process"/>
    <property type="evidence" value="ECO:0007669"/>
    <property type="project" value="TreeGrafter"/>
</dbReference>
<dbReference type="FunFam" id="3.40.50.720:FF:000045">
    <property type="entry name" value="1-deoxy-D-xylulose 5-phosphate reductoisomerase"/>
    <property type="match status" value="1"/>
</dbReference>
<dbReference type="Gene3D" id="1.10.1740.10">
    <property type="match status" value="1"/>
</dbReference>
<dbReference type="Gene3D" id="3.40.50.720">
    <property type="entry name" value="NAD(P)-binding Rossmann-like Domain"/>
    <property type="match status" value="1"/>
</dbReference>
<dbReference type="HAMAP" id="MF_00183">
    <property type="entry name" value="DXP_reductoisom"/>
    <property type="match status" value="1"/>
</dbReference>
<dbReference type="InterPro" id="IPR003821">
    <property type="entry name" value="DXP_reductoisomerase"/>
</dbReference>
<dbReference type="InterPro" id="IPR013644">
    <property type="entry name" value="DXP_reductoisomerase_C"/>
</dbReference>
<dbReference type="InterPro" id="IPR013512">
    <property type="entry name" value="DXP_reductoisomerase_N"/>
</dbReference>
<dbReference type="InterPro" id="IPR026877">
    <property type="entry name" value="DXPR_C"/>
</dbReference>
<dbReference type="InterPro" id="IPR036169">
    <property type="entry name" value="DXPR_C_sf"/>
</dbReference>
<dbReference type="InterPro" id="IPR036291">
    <property type="entry name" value="NAD(P)-bd_dom_sf"/>
</dbReference>
<dbReference type="NCBIfam" id="TIGR00243">
    <property type="entry name" value="Dxr"/>
    <property type="match status" value="1"/>
</dbReference>
<dbReference type="NCBIfam" id="NF003938">
    <property type="entry name" value="PRK05447.1-1"/>
    <property type="match status" value="1"/>
</dbReference>
<dbReference type="NCBIfam" id="NF009114">
    <property type="entry name" value="PRK12464.1"/>
    <property type="match status" value="1"/>
</dbReference>
<dbReference type="PANTHER" id="PTHR30525">
    <property type="entry name" value="1-DEOXY-D-XYLULOSE 5-PHOSPHATE REDUCTOISOMERASE"/>
    <property type="match status" value="1"/>
</dbReference>
<dbReference type="PANTHER" id="PTHR30525:SF0">
    <property type="entry name" value="1-DEOXY-D-XYLULOSE 5-PHOSPHATE REDUCTOISOMERASE, CHLOROPLASTIC"/>
    <property type="match status" value="1"/>
</dbReference>
<dbReference type="Pfam" id="PF08436">
    <property type="entry name" value="DXP_redisom_C"/>
    <property type="match status" value="1"/>
</dbReference>
<dbReference type="Pfam" id="PF02670">
    <property type="entry name" value="DXP_reductoisom"/>
    <property type="match status" value="1"/>
</dbReference>
<dbReference type="Pfam" id="PF13288">
    <property type="entry name" value="DXPR_C"/>
    <property type="match status" value="1"/>
</dbReference>
<dbReference type="PIRSF" id="PIRSF006205">
    <property type="entry name" value="Dxp_reductismrs"/>
    <property type="match status" value="1"/>
</dbReference>
<dbReference type="SUPFAM" id="SSF69055">
    <property type="entry name" value="1-deoxy-D-xylulose-5-phosphate reductoisomerase, C-terminal domain"/>
    <property type="match status" value="1"/>
</dbReference>
<dbReference type="SUPFAM" id="SSF55347">
    <property type="entry name" value="Glyceraldehyde-3-phosphate dehydrogenase-like, C-terminal domain"/>
    <property type="match status" value="1"/>
</dbReference>
<dbReference type="SUPFAM" id="SSF51735">
    <property type="entry name" value="NAD(P)-binding Rossmann-fold domains"/>
    <property type="match status" value="1"/>
</dbReference>
<proteinExistence type="inferred from homology"/>
<keyword id="KW-0414">Isoprene biosynthesis</keyword>
<keyword id="KW-0464">Manganese</keyword>
<keyword id="KW-0479">Metal-binding</keyword>
<keyword id="KW-0521">NADP</keyword>
<keyword id="KW-0560">Oxidoreductase</keyword>
<accession>Q3KHA6</accession>
<name>DXR_PSEPF</name>
<reference key="1">
    <citation type="journal article" date="2009" name="Genome Biol.">
        <title>Genomic and genetic analyses of diversity and plant interactions of Pseudomonas fluorescens.</title>
        <authorList>
            <person name="Silby M.W."/>
            <person name="Cerdeno-Tarraga A.M."/>
            <person name="Vernikos G.S."/>
            <person name="Giddens S.R."/>
            <person name="Jackson R.W."/>
            <person name="Preston G.M."/>
            <person name="Zhang X.-X."/>
            <person name="Moon C.D."/>
            <person name="Gehrig S.M."/>
            <person name="Godfrey S.A.C."/>
            <person name="Knight C.G."/>
            <person name="Malone J.G."/>
            <person name="Robinson Z."/>
            <person name="Spiers A.J."/>
            <person name="Harris S."/>
            <person name="Challis G.L."/>
            <person name="Yaxley A.M."/>
            <person name="Harris D."/>
            <person name="Seeger K."/>
            <person name="Murphy L."/>
            <person name="Rutter S."/>
            <person name="Squares R."/>
            <person name="Quail M.A."/>
            <person name="Saunders E."/>
            <person name="Mavromatis K."/>
            <person name="Brettin T.S."/>
            <person name="Bentley S.D."/>
            <person name="Hothersall J."/>
            <person name="Stephens E."/>
            <person name="Thomas C.M."/>
            <person name="Parkhill J."/>
            <person name="Levy S.B."/>
            <person name="Rainey P.B."/>
            <person name="Thomson N.R."/>
        </authorList>
    </citation>
    <scope>NUCLEOTIDE SEQUENCE [LARGE SCALE GENOMIC DNA]</scope>
    <source>
        <strain>Pf0-1</strain>
    </source>
</reference>
<comment type="function">
    <text evidence="1">Catalyzes the NADPH-dependent rearrangement and reduction of 1-deoxy-D-xylulose-5-phosphate (DXP) to 2-C-methyl-D-erythritol 4-phosphate (MEP).</text>
</comment>
<comment type="catalytic activity">
    <reaction evidence="1">
        <text>2-C-methyl-D-erythritol 4-phosphate + NADP(+) = 1-deoxy-D-xylulose 5-phosphate + NADPH + H(+)</text>
        <dbReference type="Rhea" id="RHEA:13717"/>
        <dbReference type="ChEBI" id="CHEBI:15378"/>
        <dbReference type="ChEBI" id="CHEBI:57783"/>
        <dbReference type="ChEBI" id="CHEBI:57792"/>
        <dbReference type="ChEBI" id="CHEBI:58262"/>
        <dbReference type="ChEBI" id="CHEBI:58349"/>
        <dbReference type="EC" id="1.1.1.267"/>
    </reaction>
    <physiologicalReaction direction="right-to-left" evidence="1">
        <dbReference type="Rhea" id="RHEA:13719"/>
    </physiologicalReaction>
</comment>
<comment type="cofactor">
    <cofactor evidence="1">
        <name>Mg(2+)</name>
        <dbReference type="ChEBI" id="CHEBI:18420"/>
    </cofactor>
    <cofactor evidence="1">
        <name>Mn(2+)</name>
        <dbReference type="ChEBI" id="CHEBI:29035"/>
    </cofactor>
</comment>
<comment type="pathway">
    <text evidence="1">Isoprenoid biosynthesis; isopentenyl diphosphate biosynthesis via DXP pathway; isopentenyl diphosphate from 1-deoxy-D-xylulose 5-phosphate: step 1/6.</text>
</comment>
<comment type="similarity">
    <text evidence="1">Belongs to the DXR family.</text>
</comment>
<gene>
    <name evidence="1" type="primary">dxr</name>
    <name type="ordered locus">Pfl01_1107</name>
</gene>
<organism>
    <name type="scientific">Pseudomonas fluorescens (strain Pf0-1)</name>
    <dbReference type="NCBI Taxonomy" id="205922"/>
    <lineage>
        <taxon>Bacteria</taxon>
        <taxon>Pseudomonadati</taxon>
        <taxon>Pseudomonadota</taxon>
        <taxon>Gammaproteobacteria</taxon>
        <taxon>Pseudomonadales</taxon>
        <taxon>Pseudomonadaceae</taxon>
        <taxon>Pseudomonas</taxon>
    </lineage>
</organism>
<sequence>MSRPQQITVLGATGSIGLSTLDVIARHPDRYQAFALSGFTRLSELFALCVRHLPEYAVVPEAGAARNLQDDLRAAGLSTQVLVGEEGLCQVAAAPEVDAVMAAIVGAAGLRPTLAAVEAGKKILLANKEALVMSGALFMQAVRKSGSVLLPIDSEHNAIFQCMPQDFARGLSNVGVRRILLTASGGPFRQTPMAELAHVSPDQACAHPNWSMGRKISVDSASMMNKGLELIEACWLFDAKPSQVEVVIHPQSVIHSLVDYVDGSVLAQLGNPDMRTPIANALAWPERIDSGVAPLDLFAVARLDFEAPDEERFPCLRLARQAAEAGNSAPAMLNAANEVAVAAFLDGRVRYLEIASIIEEVLNLEPVVALDNLDAVFAADATARTLAGQWLSRNGR</sequence>
<evidence type="ECO:0000255" key="1">
    <source>
        <dbReference type="HAMAP-Rule" id="MF_00183"/>
    </source>
</evidence>
<protein>
    <recommendedName>
        <fullName evidence="1">1-deoxy-D-xylulose 5-phosphate reductoisomerase</fullName>
        <shortName evidence="1">DXP reductoisomerase</shortName>
        <ecNumber evidence="1">1.1.1.267</ecNumber>
    </recommendedName>
    <alternativeName>
        <fullName evidence="1">1-deoxyxylulose-5-phosphate reductoisomerase</fullName>
    </alternativeName>
    <alternativeName>
        <fullName evidence="1">2-C-methyl-D-erythritol 4-phosphate synthase</fullName>
    </alternativeName>
</protein>
<feature type="chain" id="PRO_1000020293" description="1-deoxy-D-xylulose 5-phosphate reductoisomerase">
    <location>
        <begin position="1"/>
        <end position="396"/>
    </location>
</feature>
<feature type="binding site" evidence="1">
    <location>
        <position position="13"/>
    </location>
    <ligand>
        <name>NADPH</name>
        <dbReference type="ChEBI" id="CHEBI:57783"/>
    </ligand>
</feature>
<feature type="binding site" evidence="1">
    <location>
        <position position="14"/>
    </location>
    <ligand>
        <name>NADPH</name>
        <dbReference type="ChEBI" id="CHEBI:57783"/>
    </ligand>
</feature>
<feature type="binding site" evidence="1">
    <location>
        <position position="15"/>
    </location>
    <ligand>
        <name>NADPH</name>
        <dbReference type="ChEBI" id="CHEBI:57783"/>
    </ligand>
</feature>
<feature type="binding site" evidence="1">
    <location>
        <position position="16"/>
    </location>
    <ligand>
        <name>NADPH</name>
        <dbReference type="ChEBI" id="CHEBI:57783"/>
    </ligand>
</feature>
<feature type="binding site" evidence="1">
    <location>
        <position position="127"/>
    </location>
    <ligand>
        <name>NADPH</name>
        <dbReference type="ChEBI" id="CHEBI:57783"/>
    </ligand>
</feature>
<feature type="binding site" evidence="1">
    <location>
        <position position="128"/>
    </location>
    <ligand>
        <name>1-deoxy-D-xylulose 5-phosphate</name>
        <dbReference type="ChEBI" id="CHEBI:57792"/>
    </ligand>
</feature>
<feature type="binding site" evidence="1">
    <location>
        <position position="129"/>
    </location>
    <ligand>
        <name>NADPH</name>
        <dbReference type="ChEBI" id="CHEBI:57783"/>
    </ligand>
</feature>
<feature type="binding site" evidence="1">
    <location>
        <position position="153"/>
    </location>
    <ligand>
        <name>Mn(2+)</name>
        <dbReference type="ChEBI" id="CHEBI:29035"/>
    </ligand>
</feature>
<feature type="binding site" evidence="1">
    <location>
        <position position="154"/>
    </location>
    <ligand>
        <name>1-deoxy-D-xylulose 5-phosphate</name>
        <dbReference type="ChEBI" id="CHEBI:57792"/>
    </ligand>
</feature>
<feature type="binding site" evidence="1">
    <location>
        <position position="155"/>
    </location>
    <ligand>
        <name>1-deoxy-D-xylulose 5-phosphate</name>
        <dbReference type="ChEBI" id="CHEBI:57792"/>
    </ligand>
</feature>
<feature type="binding site" evidence="1">
    <location>
        <position position="155"/>
    </location>
    <ligand>
        <name>Mn(2+)</name>
        <dbReference type="ChEBI" id="CHEBI:29035"/>
    </ligand>
</feature>
<feature type="binding site" evidence="1">
    <location>
        <position position="184"/>
    </location>
    <ligand>
        <name>1-deoxy-D-xylulose 5-phosphate</name>
        <dbReference type="ChEBI" id="CHEBI:57792"/>
    </ligand>
</feature>
<feature type="binding site" evidence="1">
    <location>
        <position position="207"/>
    </location>
    <ligand>
        <name>1-deoxy-D-xylulose 5-phosphate</name>
        <dbReference type="ChEBI" id="CHEBI:57792"/>
    </ligand>
</feature>
<feature type="binding site" evidence="1">
    <location>
        <position position="213"/>
    </location>
    <ligand>
        <name>NADPH</name>
        <dbReference type="ChEBI" id="CHEBI:57783"/>
    </ligand>
</feature>
<feature type="binding site" evidence="1">
    <location>
        <position position="220"/>
    </location>
    <ligand>
        <name>1-deoxy-D-xylulose 5-phosphate</name>
        <dbReference type="ChEBI" id="CHEBI:57792"/>
    </ligand>
</feature>
<feature type="binding site" evidence="1">
    <location>
        <position position="225"/>
    </location>
    <ligand>
        <name>1-deoxy-D-xylulose 5-phosphate</name>
        <dbReference type="ChEBI" id="CHEBI:57792"/>
    </ligand>
</feature>
<feature type="binding site" evidence="1">
    <location>
        <position position="226"/>
    </location>
    <ligand>
        <name>1-deoxy-D-xylulose 5-phosphate</name>
        <dbReference type="ChEBI" id="CHEBI:57792"/>
    </ligand>
</feature>
<feature type="binding site" evidence="1">
    <location>
        <position position="229"/>
    </location>
    <ligand>
        <name>1-deoxy-D-xylulose 5-phosphate</name>
        <dbReference type="ChEBI" id="CHEBI:57792"/>
    </ligand>
</feature>
<feature type="binding site" evidence="1">
    <location>
        <position position="229"/>
    </location>
    <ligand>
        <name>Mn(2+)</name>
        <dbReference type="ChEBI" id="CHEBI:29035"/>
    </ligand>
</feature>